<feature type="chain" id="PRO_0000278220" description="Kelch repeat and BTB domain-containing protein 8">
    <location>
        <begin position="1"/>
        <end position="601"/>
    </location>
</feature>
<feature type="domain" description="BTB" evidence="2">
    <location>
        <begin position="49"/>
        <end position="117"/>
    </location>
</feature>
<feature type="domain" description="BACK" evidence="1">
    <location>
        <begin position="153"/>
        <end position="252"/>
    </location>
</feature>
<feature type="repeat" description="Kelch 1" evidence="1">
    <location>
        <begin position="336"/>
        <end position="390"/>
    </location>
</feature>
<feature type="repeat" description="Kelch 2" evidence="1">
    <location>
        <begin position="391"/>
        <end position="441"/>
    </location>
</feature>
<feature type="repeat" description="Kelch 3" evidence="1">
    <location>
        <begin position="443"/>
        <end position="481"/>
    </location>
</feature>
<feature type="repeat" description="Kelch 4" evidence="1">
    <location>
        <begin position="483"/>
        <end position="532"/>
    </location>
</feature>
<feature type="repeat" description="Kelch 5" evidence="1">
    <location>
        <begin position="542"/>
        <end position="588"/>
    </location>
</feature>
<feature type="region of interest" description="Disordered" evidence="3">
    <location>
        <begin position="1"/>
        <end position="25"/>
    </location>
</feature>
<feature type="compositionally biased region" description="Polar residues" evidence="3">
    <location>
        <begin position="7"/>
        <end position="22"/>
    </location>
</feature>
<feature type="splice variant" id="VSP_056107" description="In isoform 2." evidence="7">
    <location>
        <begin position="6"/>
        <end position="447"/>
    </location>
</feature>
<feature type="sequence variant" id="VAR_036082" description="In a breast cancer sample; somatic mutation." evidence="4">
    <original>S</original>
    <variation>C</variation>
    <location>
        <position position="198"/>
    </location>
</feature>
<feature type="sequence variant" id="VAR_036083" description="In a breast cancer sample; somatic mutation." evidence="4">
    <original>R</original>
    <variation>K</variation>
    <location>
        <position position="405"/>
    </location>
</feature>
<feature type="sequence variant" id="VAR_030694" description="In dbSNP:rs13096789.">
    <original>C</original>
    <variation>R</variation>
    <location>
        <position position="420"/>
    </location>
</feature>
<feature type="mutagenesis site" description="Abolishes CUL3-binding and ability to mediate monoubiquitination of NOLC1 and TCOF1." evidence="6">
    <original>Y</original>
    <variation>A</variation>
    <location>
        <position position="74"/>
    </location>
</feature>
<feature type="mutagenesis site" description="Abolishes substrate-binding and ability to mediate monoubiquitination of NOLC1 and TCOF1." evidence="6">
    <original>W</original>
    <variation>A</variation>
    <location>
        <position position="579"/>
    </location>
</feature>
<proteinExistence type="evidence at protein level"/>
<comment type="function">
    <text evidence="6">Substrate-specific adapter of a BCR (BTB-CUL3-RBX1) E3 ubiquitin ligase complex that acts as a regulator of neural crest specification (PubMed:26399832). The BCR(KBTBD8) complex acts by mediating monoubiquitination of NOLC1 and TCOF1: monoubiquitination promotes the formation of a NOLC1-TCOF1 complex that acts as a platform to connect RNA polymerase I with enzymes responsible for ribosomal processing and modification, leading to remodel the translational program of differentiating cells in favor of neural crest specification (PubMed:26399832).</text>
</comment>
<comment type="subunit">
    <text evidence="6">Component of the BCR(KBTBD8) E3 ubiquitin ligase complex, at least composed of CUL3, KBTBD8 and RBX1 (PubMed:26399832).</text>
</comment>
<comment type="interaction">
    <interactant intactId="EBI-21328977">
        <id>Q8NFY9</id>
    </interactant>
    <interactant intactId="EBI-456129">
        <id>Q13618</id>
        <label>CUL3</label>
    </interactant>
    <organismsDiffer>false</organismsDiffer>
    <experiments>4</experiments>
</comment>
<comment type="interaction">
    <interactant intactId="EBI-21328977">
        <id>Q8NFY9</id>
    </interactant>
    <interactant intactId="EBI-8835653">
        <id>Q9UF56</id>
        <label>FBXL17</label>
    </interactant>
    <organismsDiffer>false</organismsDiffer>
    <experiments>3</experiments>
</comment>
<comment type="interaction">
    <interactant intactId="EBI-21328977">
        <id>Q8NFY9</id>
    </interactant>
    <interactant intactId="EBI-473695">
        <id>Q8WVZ9</id>
        <label>KBTBD7</label>
    </interactant>
    <organismsDiffer>false</organismsDiffer>
    <experiments>6</experiments>
</comment>
<comment type="subcellular location">
    <subcellularLocation>
        <location evidence="5">Cytoplasm</location>
        <location evidence="5">Cytoskeleton</location>
        <location evidence="5">Spindle</location>
    </subcellularLocation>
    <subcellularLocation>
        <location evidence="5">Golgi apparatus</location>
    </subcellularLocation>
    <text evidence="5">Translocates to the spindle apparatus during mitosis.</text>
</comment>
<comment type="alternative products">
    <event type="alternative splicing"/>
    <isoform>
        <id>Q8NFY9-1</id>
        <name>1</name>
        <sequence type="displayed"/>
    </isoform>
    <isoform>
        <id>Q8NFY9-2</id>
        <name>2</name>
        <sequence type="described" ref="VSP_056107"/>
    </isoform>
</comment>
<comment type="developmental stage">
    <text evidence="6">Down-regulated in differentiating embryonic stem cells (ESCs) (at protein level).</text>
</comment>
<comment type="similarity">
    <text evidence="8">Belongs to the KBTBD8 family.</text>
</comment>
<comment type="sequence caution" evidence="8">
    <conflict type="erroneous initiation">
        <sequence resource="EMBL-CDS" id="AAI17488"/>
    </conflict>
    <text>Truncated N-terminus.</text>
</comment>
<comment type="sequence caution" evidence="8">
    <conflict type="erroneous initiation">
        <sequence resource="EMBL-CDS" id="AAM43839"/>
    </conflict>
    <text>Truncated N-terminus.</text>
</comment>
<reference key="1">
    <citation type="journal article" date="2004" name="Nat. Genet.">
        <title>Complete sequencing and characterization of 21,243 full-length human cDNAs.</title>
        <authorList>
            <person name="Ota T."/>
            <person name="Suzuki Y."/>
            <person name="Nishikawa T."/>
            <person name="Otsuki T."/>
            <person name="Sugiyama T."/>
            <person name="Irie R."/>
            <person name="Wakamatsu A."/>
            <person name="Hayashi K."/>
            <person name="Sato H."/>
            <person name="Nagai K."/>
            <person name="Kimura K."/>
            <person name="Makita H."/>
            <person name="Sekine M."/>
            <person name="Obayashi M."/>
            <person name="Nishi T."/>
            <person name="Shibahara T."/>
            <person name="Tanaka T."/>
            <person name="Ishii S."/>
            <person name="Yamamoto J."/>
            <person name="Saito K."/>
            <person name="Kawai Y."/>
            <person name="Isono Y."/>
            <person name="Nakamura Y."/>
            <person name="Nagahari K."/>
            <person name="Murakami K."/>
            <person name="Yasuda T."/>
            <person name="Iwayanagi T."/>
            <person name="Wagatsuma M."/>
            <person name="Shiratori A."/>
            <person name="Sudo H."/>
            <person name="Hosoiri T."/>
            <person name="Kaku Y."/>
            <person name="Kodaira H."/>
            <person name="Kondo H."/>
            <person name="Sugawara M."/>
            <person name="Takahashi M."/>
            <person name="Kanda K."/>
            <person name="Yokoi T."/>
            <person name="Furuya T."/>
            <person name="Kikkawa E."/>
            <person name="Omura Y."/>
            <person name="Abe K."/>
            <person name="Kamihara K."/>
            <person name="Katsuta N."/>
            <person name="Sato K."/>
            <person name="Tanikawa M."/>
            <person name="Yamazaki M."/>
            <person name="Ninomiya K."/>
            <person name="Ishibashi T."/>
            <person name="Yamashita H."/>
            <person name="Murakawa K."/>
            <person name="Fujimori K."/>
            <person name="Tanai H."/>
            <person name="Kimata M."/>
            <person name="Watanabe M."/>
            <person name="Hiraoka S."/>
            <person name="Chiba Y."/>
            <person name="Ishida S."/>
            <person name="Ono Y."/>
            <person name="Takiguchi S."/>
            <person name="Watanabe S."/>
            <person name="Yosida M."/>
            <person name="Hotuta T."/>
            <person name="Kusano J."/>
            <person name="Kanehori K."/>
            <person name="Takahashi-Fujii A."/>
            <person name="Hara H."/>
            <person name="Tanase T.-O."/>
            <person name="Nomura Y."/>
            <person name="Togiya S."/>
            <person name="Komai F."/>
            <person name="Hara R."/>
            <person name="Takeuchi K."/>
            <person name="Arita M."/>
            <person name="Imose N."/>
            <person name="Musashino K."/>
            <person name="Yuuki H."/>
            <person name="Oshima A."/>
            <person name="Sasaki N."/>
            <person name="Aotsuka S."/>
            <person name="Yoshikawa Y."/>
            <person name="Matsunawa H."/>
            <person name="Ichihara T."/>
            <person name="Shiohata N."/>
            <person name="Sano S."/>
            <person name="Moriya S."/>
            <person name="Momiyama H."/>
            <person name="Satoh N."/>
            <person name="Takami S."/>
            <person name="Terashima Y."/>
            <person name="Suzuki O."/>
            <person name="Nakagawa S."/>
            <person name="Senoh A."/>
            <person name="Mizoguchi H."/>
            <person name="Goto Y."/>
            <person name="Shimizu F."/>
            <person name="Wakebe H."/>
            <person name="Hishigaki H."/>
            <person name="Watanabe T."/>
            <person name="Sugiyama A."/>
            <person name="Takemoto M."/>
            <person name="Kawakami B."/>
            <person name="Yamazaki M."/>
            <person name="Watanabe K."/>
            <person name="Kumagai A."/>
            <person name="Itakura S."/>
            <person name="Fukuzumi Y."/>
            <person name="Fujimori Y."/>
            <person name="Komiyama M."/>
            <person name="Tashiro H."/>
            <person name="Tanigami A."/>
            <person name="Fujiwara T."/>
            <person name="Ono T."/>
            <person name="Yamada K."/>
            <person name="Fujii Y."/>
            <person name="Ozaki K."/>
            <person name="Hirao M."/>
            <person name="Ohmori Y."/>
            <person name="Kawabata A."/>
            <person name="Hikiji T."/>
            <person name="Kobatake N."/>
            <person name="Inagaki H."/>
            <person name="Ikema Y."/>
            <person name="Okamoto S."/>
            <person name="Okitani R."/>
            <person name="Kawakami T."/>
            <person name="Noguchi S."/>
            <person name="Itoh T."/>
            <person name="Shigeta K."/>
            <person name="Senba T."/>
            <person name="Matsumura K."/>
            <person name="Nakajima Y."/>
            <person name="Mizuno T."/>
            <person name="Morinaga M."/>
            <person name="Sasaki M."/>
            <person name="Togashi T."/>
            <person name="Oyama M."/>
            <person name="Hata H."/>
            <person name="Watanabe M."/>
            <person name="Komatsu T."/>
            <person name="Mizushima-Sugano J."/>
            <person name="Satoh T."/>
            <person name="Shirai Y."/>
            <person name="Takahashi Y."/>
            <person name="Nakagawa K."/>
            <person name="Okumura K."/>
            <person name="Nagase T."/>
            <person name="Nomura N."/>
            <person name="Kikuchi H."/>
            <person name="Masuho Y."/>
            <person name="Yamashita R."/>
            <person name="Nakai K."/>
            <person name="Yada T."/>
            <person name="Nakamura Y."/>
            <person name="Ohara O."/>
            <person name="Isogai T."/>
            <person name="Sugano S."/>
        </authorList>
    </citation>
    <scope>NUCLEOTIDE SEQUENCE [LARGE SCALE MRNA] (ISOFORMS 1 AND 2)</scope>
    <source>
        <tissue>Fetal brain</tissue>
        <tissue>Placenta</tissue>
    </source>
</reference>
<reference key="2">
    <citation type="journal article" date="2006" name="Nature">
        <title>The DNA sequence, annotation and analysis of human chromosome 3.</title>
        <authorList>
            <person name="Muzny D.M."/>
            <person name="Scherer S.E."/>
            <person name="Kaul R."/>
            <person name="Wang J."/>
            <person name="Yu J."/>
            <person name="Sudbrak R."/>
            <person name="Buhay C.J."/>
            <person name="Chen R."/>
            <person name="Cree A."/>
            <person name="Ding Y."/>
            <person name="Dugan-Rocha S."/>
            <person name="Gill R."/>
            <person name="Gunaratne P."/>
            <person name="Harris R.A."/>
            <person name="Hawes A.C."/>
            <person name="Hernandez J."/>
            <person name="Hodgson A.V."/>
            <person name="Hume J."/>
            <person name="Jackson A."/>
            <person name="Khan Z.M."/>
            <person name="Kovar-Smith C."/>
            <person name="Lewis L.R."/>
            <person name="Lozado R.J."/>
            <person name="Metzker M.L."/>
            <person name="Milosavljevic A."/>
            <person name="Miner G.R."/>
            <person name="Morgan M.B."/>
            <person name="Nazareth L.V."/>
            <person name="Scott G."/>
            <person name="Sodergren E."/>
            <person name="Song X.-Z."/>
            <person name="Steffen D."/>
            <person name="Wei S."/>
            <person name="Wheeler D.A."/>
            <person name="Wright M.W."/>
            <person name="Worley K.C."/>
            <person name="Yuan Y."/>
            <person name="Zhang Z."/>
            <person name="Adams C.Q."/>
            <person name="Ansari-Lari M.A."/>
            <person name="Ayele M."/>
            <person name="Brown M.J."/>
            <person name="Chen G."/>
            <person name="Chen Z."/>
            <person name="Clendenning J."/>
            <person name="Clerc-Blankenburg K.P."/>
            <person name="Chen R."/>
            <person name="Chen Z."/>
            <person name="Davis C."/>
            <person name="Delgado O."/>
            <person name="Dinh H.H."/>
            <person name="Dong W."/>
            <person name="Draper H."/>
            <person name="Ernst S."/>
            <person name="Fu G."/>
            <person name="Gonzalez-Garay M.L."/>
            <person name="Garcia D.K."/>
            <person name="Gillett W."/>
            <person name="Gu J."/>
            <person name="Hao B."/>
            <person name="Haugen E."/>
            <person name="Havlak P."/>
            <person name="He X."/>
            <person name="Hennig S."/>
            <person name="Hu S."/>
            <person name="Huang W."/>
            <person name="Jackson L.R."/>
            <person name="Jacob L.S."/>
            <person name="Kelly S.H."/>
            <person name="Kube M."/>
            <person name="Levy R."/>
            <person name="Li Z."/>
            <person name="Liu B."/>
            <person name="Liu J."/>
            <person name="Liu W."/>
            <person name="Lu J."/>
            <person name="Maheshwari M."/>
            <person name="Nguyen B.-V."/>
            <person name="Okwuonu G.O."/>
            <person name="Palmeiri A."/>
            <person name="Pasternak S."/>
            <person name="Perez L.M."/>
            <person name="Phelps K.A."/>
            <person name="Plopper F.J."/>
            <person name="Qiang B."/>
            <person name="Raymond C."/>
            <person name="Rodriguez R."/>
            <person name="Saenphimmachak C."/>
            <person name="Santibanez J."/>
            <person name="Shen H."/>
            <person name="Shen Y."/>
            <person name="Subramanian S."/>
            <person name="Tabor P.E."/>
            <person name="Verduzco D."/>
            <person name="Waldron L."/>
            <person name="Wang J."/>
            <person name="Wang J."/>
            <person name="Wang Q."/>
            <person name="Williams G.A."/>
            <person name="Wong G.K.-S."/>
            <person name="Yao Z."/>
            <person name="Zhang J."/>
            <person name="Zhang X."/>
            <person name="Zhao G."/>
            <person name="Zhou J."/>
            <person name="Zhou Y."/>
            <person name="Nelson D."/>
            <person name="Lehrach H."/>
            <person name="Reinhardt R."/>
            <person name="Naylor S.L."/>
            <person name="Yang H."/>
            <person name="Olson M."/>
            <person name="Weinstock G."/>
            <person name="Gibbs R.A."/>
        </authorList>
    </citation>
    <scope>NUCLEOTIDE SEQUENCE [LARGE SCALE GENOMIC DNA]</scope>
</reference>
<reference key="3">
    <citation type="submission" date="2001-05" db="EMBL/GenBank/DDBJ databases">
        <title>T lymphocyte activation gene discovery using ink-jet microarrays.</title>
        <authorList>
            <person name="Mao M."/>
            <person name="Biery M.C."/>
            <person name="Kobayashi S.V."/>
            <person name="Schimmack G.A."/>
            <person name="Ward T.R."/>
            <person name="Schelter J.M."/>
            <person name="Burchard J."/>
            <person name="He Y.D."/>
            <person name="Dai H."/>
            <person name="Leonardson A."/>
            <person name="Coffey E."/>
            <person name="Stoughton R."/>
            <person name="Linsley P.S."/>
        </authorList>
    </citation>
    <scope>NUCLEOTIDE SEQUENCE [MRNA] OF 6-601 (ISOFORM 1)</scope>
    <source>
        <tissue>T-cell</tissue>
    </source>
</reference>
<reference key="4">
    <citation type="journal article" date="2004" name="Genome Res.">
        <title>The status, quality, and expansion of the NIH full-length cDNA project: the Mammalian Gene Collection (MGC).</title>
        <authorList>
            <consortium name="The MGC Project Team"/>
        </authorList>
    </citation>
    <scope>NUCLEOTIDE SEQUENCE [LARGE SCALE MRNA] OF 18-601 (ISOFORM 1)</scope>
    <source>
        <tissue>Lung</tissue>
    </source>
</reference>
<reference key="5">
    <citation type="journal article" date="2001" name="DNA Res.">
        <title>Prediction of the coding sequences of unidentified human genes. XX. The complete sequences of 100 new cDNA clones from brain which code for large proteins in vitro.</title>
        <authorList>
            <person name="Nagase T."/>
            <person name="Nakayama M."/>
            <person name="Nakajima D."/>
            <person name="Kikuno R."/>
            <person name="Ohara O."/>
        </authorList>
    </citation>
    <scope>NUCLEOTIDE SEQUENCE [LARGE SCALE MRNA] OF 76-575 (ISOFORM 1)</scope>
    <source>
        <tissue>Brain</tissue>
    </source>
</reference>
<reference key="6">
    <citation type="journal article" date="2002" name="DNA Res.">
        <title>Construction of expression-ready cDNA clones for KIAA genes: manual curation of 330 KIAA cDNA clones.</title>
        <authorList>
            <person name="Nakajima D."/>
            <person name="Okazaki N."/>
            <person name="Yamakawa H."/>
            <person name="Kikuno R."/>
            <person name="Ohara O."/>
            <person name="Nagase T."/>
        </authorList>
    </citation>
    <scope>SEQUENCE REVISION</scope>
</reference>
<reference key="7">
    <citation type="journal article" date="2013" name="Cell Div.">
        <title>The novel BTB-kelch protein, KBTBD8, is located in the Golgi apparatus and translocates to the spindle apparatus during mitosis.</title>
        <authorList>
            <person name="Luhrig S."/>
            <person name="Kolb S."/>
            <person name="Mellies N."/>
            <person name="Nolte J."/>
        </authorList>
    </citation>
    <scope>SUBCELLULAR LOCATION</scope>
</reference>
<reference key="8">
    <citation type="journal article" date="2006" name="Science">
        <title>The consensus coding sequences of human breast and colorectal cancers.</title>
        <authorList>
            <person name="Sjoeblom T."/>
            <person name="Jones S."/>
            <person name="Wood L.D."/>
            <person name="Parsons D.W."/>
            <person name="Lin J."/>
            <person name="Barber T.D."/>
            <person name="Mandelker D."/>
            <person name="Leary R.J."/>
            <person name="Ptak J."/>
            <person name="Silliman N."/>
            <person name="Szabo S."/>
            <person name="Buckhaults P."/>
            <person name="Farrell C."/>
            <person name="Meeh P."/>
            <person name="Markowitz S.D."/>
            <person name="Willis J."/>
            <person name="Dawson D."/>
            <person name="Willson J.K.V."/>
            <person name="Gazdar A.F."/>
            <person name="Hartigan J."/>
            <person name="Wu L."/>
            <person name="Liu C."/>
            <person name="Parmigiani G."/>
            <person name="Park B.H."/>
            <person name="Bachman K.E."/>
            <person name="Papadopoulos N."/>
            <person name="Vogelstein B."/>
            <person name="Kinzler K.W."/>
            <person name="Velculescu V.E."/>
        </authorList>
    </citation>
    <scope>VARIANTS [LARGE SCALE ANALYSIS] CYS-198 AND LYS-405</scope>
</reference>
<reference key="9">
    <citation type="journal article" date="2015" name="Nature">
        <title>Cell-fate determination by ubiquitin-dependent regulation of translation.</title>
        <authorList>
            <person name="Werner A."/>
            <person name="Iwasaki S."/>
            <person name="McGourty C.A."/>
            <person name="Medina-Ruiz S."/>
            <person name="Teerikorpi N."/>
            <person name="Fedrigo I."/>
            <person name="Ingolia N.T."/>
            <person name="Rape M."/>
        </authorList>
    </citation>
    <scope>FUNCTION</scope>
    <scope>IDENTIFICATION IN THE BCR(KBTBD8) COMPLEX</scope>
    <scope>DEVELOPMENTAL STAGE</scope>
    <scope>MUTAGENESIS OF TYR-74 AND TRP-579</scope>
</reference>
<sequence length="601" mass="68823">MAASADLSKSSPTPNGIPSSDPASDAMDPFHACSILKQLKTMYDEGQLTDIVVEVDHGKTFSCHRNVLAAISPYFRSMFTSGLTESTQKEVRIVGVEAESMDLVLNYAYTSRVILTEANVQALFTAASIFQIPSIQDQCAKYMISHLDPQNSIGVFIFADHYGHQELGDRSKEYIRKKFLCVTKEQEFLQLTKDQLISILDSDDLNVDREEHVYESIIRWFEHEQNEREVHLPEIFAKCIRFPLMEDTFIEKIPPQFAQAIAKSCVEKGPSNTNGCTQRLGMTASEMIICFDAAHKHSGKKQTVPCLDIVTGRVFKLCKPPNDLREVGILVSPDNDIYIAGGYRPSSSEVSIDHKAENDFWMYDHSTNRWLSKPSLLRARIGCKLVYCCGKMYAIGGRVYEGDGRNSLKSVECYDSRENCWTTVCAMPVAMEFHNAVEYKEKIYVLQGEFFLFYEPQKDYWGFLTPMTVPRIQGLAAVYKDSIYYIAGTCGNHQRMFTVEAYDIELNKWTRKKDFPCDQSINPYLKLVLFQNKLHLFVRATQVTVEEHVFRTSRKNSLYQYDDIADQWMKVYETPDRLWDLGRHFECAVAKLYPQCLQKVL</sequence>
<name>KBTB8_HUMAN</name>
<protein>
    <recommendedName>
        <fullName>Kelch repeat and BTB domain-containing protein 8</fullName>
    </recommendedName>
    <alternativeName>
        <fullName>T-cell activation kelch repeat protein</fullName>
        <shortName>TA-KRP</shortName>
    </alternativeName>
</protein>
<evidence type="ECO:0000255" key="1"/>
<evidence type="ECO:0000255" key="2">
    <source>
        <dbReference type="PROSITE-ProRule" id="PRU00037"/>
    </source>
</evidence>
<evidence type="ECO:0000256" key="3">
    <source>
        <dbReference type="SAM" id="MobiDB-lite"/>
    </source>
</evidence>
<evidence type="ECO:0000269" key="4">
    <source>
    </source>
</evidence>
<evidence type="ECO:0000269" key="5">
    <source>
    </source>
</evidence>
<evidence type="ECO:0000269" key="6">
    <source>
    </source>
</evidence>
<evidence type="ECO:0000303" key="7">
    <source>
    </source>
</evidence>
<evidence type="ECO:0000305" key="8"/>
<gene>
    <name type="primary">KBTBD8</name>
    <name type="synonym">KIAA1842</name>
    <name type="synonym">TAKRP</name>
</gene>
<accession>Q8NFY9</accession>
<accession>B4DTW6</accession>
<accession>Q96JI5</accession>
<dbReference type="EMBL" id="AK096640">
    <property type="status" value="NOT_ANNOTATED_CDS"/>
    <property type="molecule type" value="mRNA"/>
</dbReference>
<dbReference type="EMBL" id="AK300397">
    <property type="protein sequence ID" value="BAG62128.1"/>
    <property type="molecule type" value="mRNA"/>
</dbReference>
<dbReference type="EMBL" id="AC020655">
    <property type="status" value="NOT_ANNOTATED_CDS"/>
    <property type="molecule type" value="Genomic_DNA"/>
</dbReference>
<dbReference type="EMBL" id="AF385438">
    <property type="protein sequence ID" value="AAM43839.1"/>
    <property type="status" value="ALT_INIT"/>
    <property type="molecule type" value="mRNA"/>
</dbReference>
<dbReference type="EMBL" id="BC117487">
    <property type="protein sequence ID" value="AAI17488.1"/>
    <property type="status" value="ALT_INIT"/>
    <property type="molecule type" value="mRNA"/>
</dbReference>
<dbReference type="EMBL" id="AB058745">
    <property type="protein sequence ID" value="BAB47471.1"/>
    <property type="molecule type" value="mRNA"/>
</dbReference>
<dbReference type="CCDS" id="CCDS2906.2">
    <molecule id="Q8NFY9-1"/>
</dbReference>
<dbReference type="RefSeq" id="NP_115894.2">
    <molecule id="Q8NFY9-1"/>
    <property type="nucleotide sequence ID" value="NM_032505.3"/>
</dbReference>
<dbReference type="SMR" id="Q8NFY9"/>
<dbReference type="BioGRID" id="124128">
    <property type="interactions" value="20"/>
</dbReference>
<dbReference type="ComplexPortal" id="CPX-8941">
    <property type="entry name" value="CRL3 E3 ubiquitin ligase complex, KBTBD8 variant"/>
</dbReference>
<dbReference type="FunCoup" id="Q8NFY9">
    <property type="interactions" value="239"/>
</dbReference>
<dbReference type="IntAct" id="Q8NFY9">
    <property type="interactions" value="13"/>
</dbReference>
<dbReference type="STRING" id="9606.ENSP00000401878"/>
<dbReference type="iPTMnet" id="Q8NFY9"/>
<dbReference type="PhosphoSitePlus" id="Q8NFY9"/>
<dbReference type="BioMuta" id="KBTBD8"/>
<dbReference type="DMDM" id="126215728"/>
<dbReference type="jPOST" id="Q8NFY9"/>
<dbReference type="MassIVE" id="Q8NFY9"/>
<dbReference type="PaxDb" id="9606-ENSP00000401878"/>
<dbReference type="PeptideAtlas" id="Q8NFY9"/>
<dbReference type="ProteomicsDB" id="5133"/>
<dbReference type="ProteomicsDB" id="73392">
    <molecule id="Q8NFY9-1"/>
</dbReference>
<dbReference type="Pumba" id="Q8NFY9"/>
<dbReference type="Antibodypedia" id="51228">
    <property type="antibodies" value="70 antibodies from 16 providers"/>
</dbReference>
<dbReference type="DNASU" id="84541"/>
<dbReference type="Ensembl" id="ENST00000417314.2">
    <molecule id="Q8NFY9-1"/>
    <property type="protein sequence ID" value="ENSP00000401878.2"/>
    <property type="gene ID" value="ENSG00000163376.11"/>
</dbReference>
<dbReference type="Ensembl" id="ENST00000460576.5">
    <molecule id="Q8NFY9-2"/>
    <property type="protein sequence ID" value="ENSP00000419738.1"/>
    <property type="gene ID" value="ENSG00000163376.11"/>
</dbReference>
<dbReference type="GeneID" id="84541"/>
<dbReference type="KEGG" id="hsa:84541"/>
<dbReference type="MANE-Select" id="ENST00000417314.2">
    <property type="protein sequence ID" value="ENSP00000401878.2"/>
    <property type="RefSeq nucleotide sequence ID" value="NM_032505.3"/>
    <property type="RefSeq protein sequence ID" value="NP_115894.2"/>
</dbReference>
<dbReference type="UCSC" id="uc003dmy.4">
    <molecule id="Q8NFY9-1"/>
    <property type="organism name" value="human"/>
</dbReference>
<dbReference type="AGR" id="HGNC:30691"/>
<dbReference type="CTD" id="84541"/>
<dbReference type="DisGeNET" id="84541"/>
<dbReference type="GeneCards" id="KBTBD8"/>
<dbReference type="HGNC" id="HGNC:30691">
    <property type="gene designation" value="KBTBD8"/>
</dbReference>
<dbReference type="HPA" id="ENSG00000163376">
    <property type="expression patterns" value="Tissue enhanced (bone marrow, lymphoid tissue)"/>
</dbReference>
<dbReference type="MIM" id="616607">
    <property type="type" value="gene"/>
</dbReference>
<dbReference type="neXtProt" id="NX_Q8NFY9"/>
<dbReference type="OpenTargets" id="ENSG00000163376"/>
<dbReference type="PharmGKB" id="PA142671641"/>
<dbReference type="VEuPathDB" id="HostDB:ENSG00000163376"/>
<dbReference type="eggNOG" id="KOG4441">
    <property type="taxonomic scope" value="Eukaryota"/>
</dbReference>
<dbReference type="GeneTree" id="ENSGT00940000158653"/>
<dbReference type="HOGENOM" id="CLU_1660073_0_0_1"/>
<dbReference type="InParanoid" id="Q8NFY9"/>
<dbReference type="OMA" id="FWMYDHA"/>
<dbReference type="OrthoDB" id="45365at2759"/>
<dbReference type="PAN-GO" id="Q8NFY9">
    <property type="GO annotations" value="0 GO annotations based on evolutionary models"/>
</dbReference>
<dbReference type="PhylomeDB" id="Q8NFY9"/>
<dbReference type="TreeFam" id="TF332672"/>
<dbReference type="PathwayCommons" id="Q8NFY9"/>
<dbReference type="Reactome" id="R-HSA-8951664">
    <property type="pathway name" value="Neddylation"/>
</dbReference>
<dbReference type="Reactome" id="R-HSA-983168">
    <property type="pathway name" value="Antigen processing: Ubiquitination &amp; Proteasome degradation"/>
</dbReference>
<dbReference type="SignaLink" id="Q8NFY9"/>
<dbReference type="BioGRID-ORCS" id="84541">
    <property type="hits" value="11 hits in 1196 CRISPR screens"/>
</dbReference>
<dbReference type="ChiTaRS" id="KBTBD8">
    <property type="organism name" value="human"/>
</dbReference>
<dbReference type="GenomeRNAi" id="84541"/>
<dbReference type="Pharos" id="Q8NFY9">
    <property type="development level" value="Tbio"/>
</dbReference>
<dbReference type="PRO" id="PR:Q8NFY9"/>
<dbReference type="Proteomes" id="UP000005640">
    <property type="component" value="Chromosome 3"/>
</dbReference>
<dbReference type="RNAct" id="Q8NFY9">
    <property type="molecule type" value="protein"/>
</dbReference>
<dbReference type="Bgee" id="ENSG00000163376">
    <property type="expression patterns" value="Expressed in secondary oocyte and 160 other cell types or tissues"/>
</dbReference>
<dbReference type="ExpressionAtlas" id="Q8NFY9">
    <property type="expression patterns" value="baseline and differential"/>
</dbReference>
<dbReference type="GO" id="GO:0031463">
    <property type="term" value="C:Cul3-RING ubiquitin ligase complex"/>
    <property type="evidence" value="ECO:0000314"/>
    <property type="project" value="UniProtKB"/>
</dbReference>
<dbReference type="GO" id="GO:0005737">
    <property type="term" value="C:cytoplasm"/>
    <property type="evidence" value="ECO:0000318"/>
    <property type="project" value="GO_Central"/>
</dbReference>
<dbReference type="GO" id="GO:0005829">
    <property type="term" value="C:cytosol"/>
    <property type="evidence" value="ECO:0000304"/>
    <property type="project" value="Reactome"/>
</dbReference>
<dbReference type="GO" id="GO:0005794">
    <property type="term" value="C:Golgi apparatus"/>
    <property type="evidence" value="ECO:0007669"/>
    <property type="project" value="UniProtKB-SubCell"/>
</dbReference>
<dbReference type="GO" id="GO:0005819">
    <property type="term" value="C:spindle"/>
    <property type="evidence" value="ECO:0007669"/>
    <property type="project" value="UniProtKB-SubCell"/>
</dbReference>
<dbReference type="GO" id="GO:1990756">
    <property type="term" value="F:ubiquitin-like ligase-substrate adaptor activity"/>
    <property type="evidence" value="ECO:0000318"/>
    <property type="project" value="GO_Central"/>
</dbReference>
<dbReference type="GO" id="GO:0014032">
    <property type="term" value="P:neural crest cell development"/>
    <property type="evidence" value="ECO:0000315"/>
    <property type="project" value="UniProtKB"/>
</dbReference>
<dbReference type="GO" id="GO:0014029">
    <property type="term" value="P:neural crest formation"/>
    <property type="evidence" value="ECO:0000315"/>
    <property type="project" value="UniProtKB"/>
</dbReference>
<dbReference type="GO" id="GO:0043161">
    <property type="term" value="P:proteasome-mediated ubiquitin-dependent protein catabolic process"/>
    <property type="evidence" value="ECO:0000318"/>
    <property type="project" value="GO_Central"/>
</dbReference>
<dbReference type="GO" id="GO:0006513">
    <property type="term" value="P:protein monoubiquitination"/>
    <property type="evidence" value="ECO:0000314"/>
    <property type="project" value="UniProtKB"/>
</dbReference>
<dbReference type="GO" id="GO:0006417">
    <property type="term" value="P:regulation of translation"/>
    <property type="evidence" value="ECO:0007669"/>
    <property type="project" value="UniProtKB-KW"/>
</dbReference>
<dbReference type="CDD" id="cd18274">
    <property type="entry name" value="BTB_POZ_KBTBD8"/>
    <property type="match status" value="1"/>
</dbReference>
<dbReference type="FunFam" id="3.30.710.10:FF:000006">
    <property type="entry name" value="Kelch repeat and BTB domain-containing 6"/>
    <property type="match status" value="1"/>
</dbReference>
<dbReference type="FunFam" id="2.120.10.80:FF:000020">
    <property type="entry name" value="Kelch repeat and BTB domain-containing protein 8"/>
    <property type="match status" value="1"/>
</dbReference>
<dbReference type="FunFam" id="1.25.40.420:FF:000014">
    <property type="entry name" value="kelch repeat and BTB domain-containing protein 8"/>
    <property type="match status" value="1"/>
</dbReference>
<dbReference type="Gene3D" id="1.25.40.420">
    <property type="match status" value="1"/>
</dbReference>
<dbReference type="Gene3D" id="2.120.10.80">
    <property type="entry name" value="Kelch-type beta propeller"/>
    <property type="match status" value="1"/>
</dbReference>
<dbReference type="Gene3D" id="3.30.710.10">
    <property type="entry name" value="Potassium Channel Kv1.1, Chain A"/>
    <property type="match status" value="1"/>
</dbReference>
<dbReference type="InterPro" id="IPR011705">
    <property type="entry name" value="BACK"/>
</dbReference>
<dbReference type="InterPro" id="IPR017096">
    <property type="entry name" value="BTB-kelch_protein"/>
</dbReference>
<dbReference type="InterPro" id="IPR000210">
    <property type="entry name" value="BTB/POZ_dom"/>
</dbReference>
<dbReference type="InterPro" id="IPR028764">
    <property type="entry name" value="BTB/POZ_KBTBD8"/>
</dbReference>
<dbReference type="InterPro" id="IPR015915">
    <property type="entry name" value="Kelch-typ_b-propeller"/>
</dbReference>
<dbReference type="InterPro" id="IPR006652">
    <property type="entry name" value="Kelch_1"/>
</dbReference>
<dbReference type="InterPro" id="IPR011333">
    <property type="entry name" value="SKP1/BTB/POZ_sf"/>
</dbReference>
<dbReference type="PANTHER" id="PTHR24412">
    <property type="entry name" value="KELCH PROTEIN"/>
    <property type="match status" value="1"/>
</dbReference>
<dbReference type="PANTHER" id="PTHR24412:SF433">
    <property type="entry name" value="KELCH REPEAT AND BTB DOMAIN-CONTAINING PROTEIN 8"/>
    <property type="match status" value="1"/>
</dbReference>
<dbReference type="Pfam" id="PF07707">
    <property type="entry name" value="BACK"/>
    <property type="match status" value="1"/>
</dbReference>
<dbReference type="Pfam" id="PF00651">
    <property type="entry name" value="BTB"/>
    <property type="match status" value="1"/>
</dbReference>
<dbReference type="Pfam" id="PF01344">
    <property type="entry name" value="Kelch_1"/>
    <property type="match status" value="3"/>
</dbReference>
<dbReference type="PIRSF" id="PIRSF037037">
    <property type="entry name" value="Kelch-like_protein_gigaxonin"/>
    <property type="match status" value="1"/>
</dbReference>
<dbReference type="SMART" id="SM00875">
    <property type="entry name" value="BACK"/>
    <property type="match status" value="1"/>
</dbReference>
<dbReference type="SMART" id="SM00225">
    <property type="entry name" value="BTB"/>
    <property type="match status" value="1"/>
</dbReference>
<dbReference type="SMART" id="SM00612">
    <property type="entry name" value="Kelch"/>
    <property type="match status" value="3"/>
</dbReference>
<dbReference type="SUPFAM" id="SSF117281">
    <property type="entry name" value="Kelch motif"/>
    <property type="match status" value="1"/>
</dbReference>
<dbReference type="SUPFAM" id="SSF54695">
    <property type="entry name" value="POZ domain"/>
    <property type="match status" value="1"/>
</dbReference>
<dbReference type="PROSITE" id="PS50097">
    <property type="entry name" value="BTB"/>
    <property type="match status" value="1"/>
</dbReference>
<keyword id="KW-0025">Alternative splicing</keyword>
<keyword id="KW-0963">Cytoplasm</keyword>
<keyword id="KW-0206">Cytoskeleton</keyword>
<keyword id="KW-0333">Golgi apparatus</keyword>
<keyword id="KW-0880">Kelch repeat</keyword>
<keyword id="KW-1267">Proteomics identification</keyword>
<keyword id="KW-1185">Reference proteome</keyword>
<keyword id="KW-0677">Repeat</keyword>
<keyword id="KW-0810">Translation regulation</keyword>
<keyword id="KW-0833">Ubl conjugation pathway</keyword>
<organism>
    <name type="scientific">Homo sapiens</name>
    <name type="common">Human</name>
    <dbReference type="NCBI Taxonomy" id="9606"/>
    <lineage>
        <taxon>Eukaryota</taxon>
        <taxon>Metazoa</taxon>
        <taxon>Chordata</taxon>
        <taxon>Craniata</taxon>
        <taxon>Vertebrata</taxon>
        <taxon>Euteleostomi</taxon>
        <taxon>Mammalia</taxon>
        <taxon>Eutheria</taxon>
        <taxon>Euarchontoglires</taxon>
        <taxon>Primates</taxon>
        <taxon>Haplorrhini</taxon>
        <taxon>Catarrhini</taxon>
        <taxon>Hominidae</taxon>
        <taxon>Homo</taxon>
    </lineage>
</organism>